<accession>Q8ZJF7</accession>
<accession>Q0WKF1</accession>
<sequence length="173" mass="19532">MAEKRNIFLVGPMGAGKSTIGRQLAQQLNMEFFDSDQEIERRTGADVGWVFDVEGEEGFRDREEKVINELTEKQGIVLATGGGSVKSRETRNRLSARGVVVYLETTIEKQLARTQRDKKRPLLQVDEPPREVLEALAKERNPLYEEIADVTIRTDDQSAKVVANQIINMLESN</sequence>
<name>AROK_YERPE</name>
<organism>
    <name type="scientific">Yersinia pestis</name>
    <dbReference type="NCBI Taxonomy" id="632"/>
    <lineage>
        <taxon>Bacteria</taxon>
        <taxon>Pseudomonadati</taxon>
        <taxon>Pseudomonadota</taxon>
        <taxon>Gammaproteobacteria</taxon>
        <taxon>Enterobacterales</taxon>
        <taxon>Yersiniaceae</taxon>
        <taxon>Yersinia</taxon>
    </lineage>
</organism>
<keyword id="KW-0028">Amino-acid biosynthesis</keyword>
<keyword id="KW-0057">Aromatic amino acid biosynthesis</keyword>
<keyword id="KW-0067">ATP-binding</keyword>
<keyword id="KW-0963">Cytoplasm</keyword>
<keyword id="KW-0418">Kinase</keyword>
<keyword id="KW-0460">Magnesium</keyword>
<keyword id="KW-0479">Metal-binding</keyword>
<keyword id="KW-0547">Nucleotide-binding</keyword>
<keyword id="KW-1185">Reference proteome</keyword>
<keyword id="KW-0808">Transferase</keyword>
<evidence type="ECO:0000255" key="1">
    <source>
        <dbReference type="HAMAP-Rule" id="MF_00109"/>
    </source>
</evidence>
<feature type="chain" id="PRO_0000192429" description="Shikimate kinase 1">
    <location>
        <begin position="1"/>
        <end position="173"/>
    </location>
</feature>
<feature type="binding site" evidence="1">
    <location>
        <begin position="14"/>
        <end position="19"/>
    </location>
    <ligand>
        <name>ATP</name>
        <dbReference type="ChEBI" id="CHEBI:30616"/>
    </ligand>
</feature>
<feature type="binding site" evidence="1">
    <location>
        <position position="18"/>
    </location>
    <ligand>
        <name>Mg(2+)</name>
        <dbReference type="ChEBI" id="CHEBI:18420"/>
    </ligand>
</feature>
<feature type="binding site" evidence="1">
    <location>
        <position position="36"/>
    </location>
    <ligand>
        <name>substrate</name>
    </ligand>
</feature>
<feature type="binding site" evidence="1">
    <location>
        <position position="60"/>
    </location>
    <ligand>
        <name>substrate</name>
    </ligand>
</feature>
<feature type="binding site" evidence="1">
    <location>
        <position position="82"/>
    </location>
    <ligand>
        <name>substrate</name>
    </ligand>
</feature>
<feature type="binding site" evidence="1">
    <location>
        <position position="120"/>
    </location>
    <ligand>
        <name>ATP</name>
        <dbReference type="ChEBI" id="CHEBI:30616"/>
    </ligand>
</feature>
<feature type="binding site" evidence="1">
    <location>
        <position position="140"/>
    </location>
    <ligand>
        <name>substrate</name>
    </ligand>
</feature>
<feature type="binding site" evidence="1">
    <location>
        <position position="157"/>
    </location>
    <ligand>
        <name>ATP</name>
        <dbReference type="ChEBI" id="CHEBI:30616"/>
    </ligand>
</feature>
<dbReference type="EC" id="2.7.1.71" evidence="1"/>
<dbReference type="EMBL" id="AL590842">
    <property type="protein sequence ID" value="CAL18837.1"/>
    <property type="molecule type" value="Genomic_DNA"/>
</dbReference>
<dbReference type="EMBL" id="AE009952">
    <property type="protein sequence ID" value="AAM87477.1"/>
    <property type="molecule type" value="Genomic_DNA"/>
</dbReference>
<dbReference type="EMBL" id="AE017042">
    <property type="protein sequence ID" value="AAS60431.1"/>
    <property type="molecule type" value="Genomic_DNA"/>
</dbReference>
<dbReference type="PIR" id="AD0019">
    <property type="entry name" value="AD0019"/>
</dbReference>
<dbReference type="RefSeq" id="WP_002208899.1">
    <property type="nucleotide sequence ID" value="NZ_WUCM01000004.1"/>
</dbReference>
<dbReference type="RefSeq" id="YP_002345237.1">
    <property type="nucleotide sequence ID" value="NC_003143.1"/>
</dbReference>
<dbReference type="SMR" id="Q8ZJF7"/>
<dbReference type="STRING" id="214092.YPO0151"/>
<dbReference type="PaxDb" id="214092-YPO0151"/>
<dbReference type="DNASU" id="1148880"/>
<dbReference type="EnsemblBacteria" id="AAS60431">
    <property type="protein sequence ID" value="AAS60431"/>
    <property type="gene ID" value="YP_0153"/>
</dbReference>
<dbReference type="GeneID" id="96663260"/>
<dbReference type="KEGG" id="ype:YPO0151"/>
<dbReference type="KEGG" id="ypk:y3933"/>
<dbReference type="KEGG" id="ypm:YP_0153"/>
<dbReference type="PATRIC" id="fig|1028802.3.peg.175"/>
<dbReference type="eggNOG" id="COG0703">
    <property type="taxonomic scope" value="Bacteria"/>
</dbReference>
<dbReference type="HOGENOM" id="CLU_057607_2_2_6"/>
<dbReference type="OMA" id="FMGCGKS"/>
<dbReference type="OrthoDB" id="9800332at2"/>
<dbReference type="UniPathway" id="UPA00053">
    <property type="reaction ID" value="UER00088"/>
</dbReference>
<dbReference type="Proteomes" id="UP000000815">
    <property type="component" value="Chromosome"/>
</dbReference>
<dbReference type="Proteomes" id="UP000001019">
    <property type="component" value="Chromosome"/>
</dbReference>
<dbReference type="Proteomes" id="UP000002490">
    <property type="component" value="Chromosome"/>
</dbReference>
<dbReference type="GO" id="GO:0005829">
    <property type="term" value="C:cytosol"/>
    <property type="evidence" value="ECO:0000318"/>
    <property type="project" value="GO_Central"/>
</dbReference>
<dbReference type="GO" id="GO:0005524">
    <property type="term" value="F:ATP binding"/>
    <property type="evidence" value="ECO:0007669"/>
    <property type="project" value="UniProtKB-UniRule"/>
</dbReference>
<dbReference type="GO" id="GO:0000287">
    <property type="term" value="F:magnesium ion binding"/>
    <property type="evidence" value="ECO:0007669"/>
    <property type="project" value="UniProtKB-UniRule"/>
</dbReference>
<dbReference type="GO" id="GO:0004765">
    <property type="term" value="F:shikimate kinase activity"/>
    <property type="evidence" value="ECO:0000318"/>
    <property type="project" value="GO_Central"/>
</dbReference>
<dbReference type="GO" id="GO:0008652">
    <property type="term" value="P:amino acid biosynthetic process"/>
    <property type="evidence" value="ECO:0007669"/>
    <property type="project" value="UniProtKB-KW"/>
</dbReference>
<dbReference type="GO" id="GO:0009073">
    <property type="term" value="P:aromatic amino acid family biosynthetic process"/>
    <property type="evidence" value="ECO:0007669"/>
    <property type="project" value="UniProtKB-KW"/>
</dbReference>
<dbReference type="GO" id="GO:0009423">
    <property type="term" value="P:chorismate biosynthetic process"/>
    <property type="evidence" value="ECO:0007669"/>
    <property type="project" value="UniProtKB-UniRule"/>
</dbReference>
<dbReference type="CDD" id="cd00464">
    <property type="entry name" value="SK"/>
    <property type="match status" value="1"/>
</dbReference>
<dbReference type="FunFam" id="3.40.50.300:FF:000099">
    <property type="entry name" value="Shikimate kinase 1"/>
    <property type="match status" value="1"/>
</dbReference>
<dbReference type="Gene3D" id="3.40.50.300">
    <property type="entry name" value="P-loop containing nucleotide triphosphate hydrolases"/>
    <property type="match status" value="1"/>
</dbReference>
<dbReference type="HAMAP" id="MF_00109">
    <property type="entry name" value="Shikimate_kinase"/>
    <property type="match status" value="1"/>
</dbReference>
<dbReference type="InterPro" id="IPR027417">
    <property type="entry name" value="P-loop_NTPase"/>
</dbReference>
<dbReference type="InterPro" id="IPR031322">
    <property type="entry name" value="Shikimate/glucono_kinase"/>
</dbReference>
<dbReference type="InterPro" id="IPR000623">
    <property type="entry name" value="Shikimate_kinase/TSH1"/>
</dbReference>
<dbReference type="InterPro" id="IPR023000">
    <property type="entry name" value="Shikimate_kinase_CS"/>
</dbReference>
<dbReference type="NCBIfam" id="NF003456">
    <property type="entry name" value="PRK05057.1"/>
    <property type="match status" value="1"/>
</dbReference>
<dbReference type="PANTHER" id="PTHR21087">
    <property type="entry name" value="SHIKIMATE KINASE"/>
    <property type="match status" value="1"/>
</dbReference>
<dbReference type="PANTHER" id="PTHR21087:SF16">
    <property type="entry name" value="SHIKIMATE KINASE 1, CHLOROPLASTIC"/>
    <property type="match status" value="1"/>
</dbReference>
<dbReference type="Pfam" id="PF01202">
    <property type="entry name" value="SKI"/>
    <property type="match status" value="1"/>
</dbReference>
<dbReference type="PRINTS" id="PR01100">
    <property type="entry name" value="SHIKIMTKNASE"/>
</dbReference>
<dbReference type="SUPFAM" id="SSF52540">
    <property type="entry name" value="P-loop containing nucleoside triphosphate hydrolases"/>
    <property type="match status" value="1"/>
</dbReference>
<dbReference type="PROSITE" id="PS01128">
    <property type="entry name" value="SHIKIMATE_KINASE"/>
    <property type="match status" value="1"/>
</dbReference>
<reference key="1">
    <citation type="journal article" date="2001" name="Nature">
        <title>Genome sequence of Yersinia pestis, the causative agent of plague.</title>
        <authorList>
            <person name="Parkhill J."/>
            <person name="Wren B.W."/>
            <person name="Thomson N.R."/>
            <person name="Titball R.W."/>
            <person name="Holden M.T.G."/>
            <person name="Prentice M.B."/>
            <person name="Sebaihia M."/>
            <person name="James K.D."/>
            <person name="Churcher C.M."/>
            <person name="Mungall K.L."/>
            <person name="Baker S."/>
            <person name="Basham D."/>
            <person name="Bentley S.D."/>
            <person name="Brooks K."/>
            <person name="Cerdeno-Tarraga A.-M."/>
            <person name="Chillingworth T."/>
            <person name="Cronin A."/>
            <person name="Davies R.M."/>
            <person name="Davis P."/>
            <person name="Dougan G."/>
            <person name="Feltwell T."/>
            <person name="Hamlin N."/>
            <person name="Holroyd S."/>
            <person name="Jagels K."/>
            <person name="Karlyshev A.V."/>
            <person name="Leather S."/>
            <person name="Moule S."/>
            <person name="Oyston P.C.F."/>
            <person name="Quail M.A."/>
            <person name="Rutherford K.M."/>
            <person name="Simmonds M."/>
            <person name="Skelton J."/>
            <person name="Stevens K."/>
            <person name="Whitehead S."/>
            <person name="Barrell B.G."/>
        </authorList>
    </citation>
    <scope>NUCLEOTIDE SEQUENCE [LARGE SCALE GENOMIC DNA]</scope>
    <source>
        <strain>CO-92 / Biovar Orientalis</strain>
    </source>
</reference>
<reference key="2">
    <citation type="journal article" date="2002" name="J. Bacteriol.">
        <title>Genome sequence of Yersinia pestis KIM.</title>
        <authorList>
            <person name="Deng W."/>
            <person name="Burland V."/>
            <person name="Plunkett G. III"/>
            <person name="Boutin A."/>
            <person name="Mayhew G.F."/>
            <person name="Liss P."/>
            <person name="Perna N.T."/>
            <person name="Rose D.J."/>
            <person name="Mau B."/>
            <person name="Zhou S."/>
            <person name="Schwartz D.C."/>
            <person name="Fetherston J.D."/>
            <person name="Lindler L.E."/>
            <person name="Brubaker R.R."/>
            <person name="Plano G.V."/>
            <person name="Straley S.C."/>
            <person name="McDonough K.A."/>
            <person name="Nilles M.L."/>
            <person name="Matson J.S."/>
            <person name="Blattner F.R."/>
            <person name="Perry R.D."/>
        </authorList>
    </citation>
    <scope>NUCLEOTIDE SEQUENCE [LARGE SCALE GENOMIC DNA]</scope>
    <source>
        <strain>KIM10+ / Biovar Mediaevalis</strain>
    </source>
</reference>
<reference key="3">
    <citation type="journal article" date="2004" name="DNA Res.">
        <title>Complete genome sequence of Yersinia pestis strain 91001, an isolate avirulent to humans.</title>
        <authorList>
            <person name="Song Y."/>
            <person name="Tong Z."/>
            <person name="Wang J."/>
            <person name="Wang L."/>
            <person name="Guo Z."/>
            <person name="Han Y."/>
            <person name="Zhang J."/>
            <person name="Pei D."/>
            <person name="Zhou D."/>
            <person name="Qin H."/>
            <person name="Pang X."/>
            <person name="Han Y."/>
            <person name="Zhai J."/>
            <person name="Li M."/>
            <person name="Cui B."/>
            <person name="Qi Z."/>
            <person name="Jin L."/>
            <person name="Dai R."/>
            <person name="Chen F."/>
            <person name="Li S."/>
            <person name="Ye C."/>
            <person name="Du Z."/>
            <person name="Lin W."/>
            <person name="Wang J."/>
            <person name="Yu J."/>
            <person name="Yang H."/>
            <person name="Wang J."/>
            <person name="Huang P."/>
            <person name="Yang R."/>
        </authorList>
    </citation>
    <scope>NUCLEOTIDE SEQUENCE [LARGE SCALE GENOMIC DNA]</scope>
    <source>
        <strain>91001 / Biovar Mediaevalis</strain>
    </source>
</reference>
<proteinExistence type="inferred from homology"/>
<gene>
    <name evidence="1" type="primary">aroK</name>
    <name type="ordered locus">YPO0151</name>
    <name type="ordered locus">y3933</name>
    <name type="ordered locus">YP_0153</name>
</gene>
<comment type="function">
    <text evidence="1">Catalyzes the specific phosphorylation of the 3-hydroxyl group of shikimic acid using ATP as a cosubstrate.</text>
</comment>
<comment type="catalytic activity">
    <reaction evidence="1">
        <text>shikimate + ATP = 3-phosphoshikimate + ADP + H(+)</text>
        <dbReference type="Rhea" id="RHEA:13121"/>
        <dbReference type="ChEBI" id="CHEBI:15378"/>
        <dbReference type="ChEBI" id="CHEBI:30616"/>
        <dbReference type="ChEBI" id="CHEBI:36208"/>
        <dbReference type="ChEBI" id="CHEBI:145989"/>
        <dbReference type="ChEBI" id="CHEBI:456216"/>
        <dbReference type="EC" id="2.7.1.71"/>
    </reaction>
</comment>
<comment type="cofactor">
    <cofactor evidence="1">
        <name>Mg(2+)</name>
        <dbReference type="ChEBI" id="CHEBI:18420"/>
    </cofactor>
    <text evidence="1">Binds 1 Mg(2+) ion per subunit.</text>
</comment>
<comment type="pathway">
    <text evidence="1">Metabolic intermediate biosynthesis; chorismate biosynthesis; chorismate from D-erythrose 4-phosphate and phosphoenolpyruvate: step 5/7.</text>
</comment>
<comment type="subunit">
    <text evidence="1">Monomer.</text>
</comment>
<comment type="subcellular location">
    <subcellularLocation>
        <location evidence="1">Cytoplasm</location>
    </subcellularLocation>
</comment>
<comment type="similarity">
    <text evidence="1">Belongs to the shikimate kinase family.</text>
</comment>
<protein>
    <recommendedName>
        <fullName evidence="1">Shikimate kinase 1</fullName>
        <shortName evidence="1">SK 1</shortName>
        <ecNumber evidence="1">2.7.1.71</ecNumber>
    </recommendedName>
</protein>